<protein>
    <recommendedName>
        <fullName evidence="1">Protein-methionine-sulfoxide reductase catalytic subunit MsrP</fullName>
        <ecNumber evidence="1">1.8.5.-</ecNumber>
    </recommendedName>
</protein>
<comment type="function">
    <text evidence="1">Part of the MsrPQ system that repairs oxidized periplasmic proteins containing methionine sulfoxide residues (Met-O), using respiratory chain electrons. Thus protects these proteins from oxidative-stress damage caused by reactive species of oxygen and chlorine generated by the host defense mechanisms. MsrPQ is essential for the maintenance of envelope integrity under bleach stress, rescuing a wide series of structurally unrelated periplasmic proteins from methionine oxidation, including the primary periplasmic chaperone SurA and the lipoprotein Pal. The catalytic subunit MsrP is non-stereospecific, being able to reduce both (R-) and (S-) diastereoisomers of methionine sulfoxide.</text>
</comment>
<comment type="catalytic activity">
    <reaction evidence="1">
        <text>L-methionyl-[protein] + a quinone + H2O = L-methionyl-(S)-S-oxide-[protein] + a quinol</text>
        <dbReference type="Rhea" id="RHEA:51292"/>
        <dbReference type="Rhea" id="RHEA-COMP:12313"/>
        <dbReference type="Rhea" id="RHEA-COMP:12315"/>
        <dbReference type="ChEBI" id="CHEBI:15377"/>
        <dbReference type="ChEBI" id="CHEBI:16044"/>
        <dbReference type="ChEBI" id="CHEBI:24646"/>
        <dbReference type="ChEBI" id="CHEBI:44120"/>
        <dbReference type="ChEBI" id="CHEBI:132124"/>
    </reaction>
</comment>
<comment type="catalytic activity">
    <reaction evidence="1">
        <text>L-methionyl-[protein] + a quinone + H2O = L-methionyl-(R)-S-oxide-[protein] + a quinol</text>
        <dbReference type="Rhea" id="RHEA:51296"/>
        <dbReference type="Rhea" id="RHEA-COMP:12313"/>
        <dbReference type="Rhea" id="RHEA-COMP:12314"/>
        <dbReference type="ChEBI" id="CHEBI:15377"/>
        <dbReference type="ChEBI" id="CHEBI:16044"/>
        <dbReference type="ChEBI" id="CHEBI:24646"/>
        <dbReference type="ChEBI" id="CHEBI:45764"/>
        <dbReference type="ChEBI" id="CHEBI:132124"/>
    </reaction>
</comment>
<comment type="cofactor">
    <cofactor evidence="1">
        <name>Mo-molybdopterin</name>
        <dbReference type="ChEBI" id="CHEBI:71302"/>
    </cofactor>
    <text evidence="1">Binds 1 Mo-molybdopterin (Mo-MPT) cofactor per subunit.</text>
</comment>
<comment type="subunit">
    <text evidence="1">Heterodimer of a catalytic subunit (MsrP) and a heme-binding subunit (MsrQ).</text>
</comment>
<comment type="subcellular location">
    <subcellularLocation>
        <location evidence="1">Periplasm</location>
    </subcellularLocation>
    <text evidence="1">Is attached to the inner membrane when interacting with the MsrQ subunit.</text>
</comment>
<comment type="PTM">
    <text evidence="1">Predicted to be exported by the Tat system. The position of the signal peptide cleavage has not been experimentally proven.</text>
</comment>
<comment type="similarity">
    <text evidence="1">Belongs to the MsrP family.</text>
</comment>
<gene>
    <name evidence="1" type="primary">msrP</name>
    <name type="ordered locus">ECED1_2236</name>
</gene>
<evidence type="ECO:0000255" key="1">
    <source>
        <dbReference type="HAMAP-Rule" id="MF_01206"/>
    </source>
</evidence>
<proteinExistence type="inferred from homology"/>
<reference key="1">
    <citation type="journal article" date="2009" name="PLoS Genet.">
        <title>Organised genome dynamics in the Escherichia coli species results in highly diverse adaptive paths.</title>
        <authorList>
            <person name="Touchon M."/>
            <person name="Hoede C."/>
            <person name="Tenaillon O."/>
            <person name="Barbe V."/>
            <person name="Baeriswyl S."/>
            <person name="Bidet P."/>
            <person name="Bingen E."/>
            <person name="Bonacorsi S."/>
            <person name="Bouchier C."/>
            <person name="Bouvet O."/>
            <person name="Calteau A."/>
            <person name="Chiapello H."/>
            <person name="Clermont O."/>
            <person name="Cruveiller S."/>
            <person name="Danchin A."/>
            <person name="Diard M."/>
            <person name="Dossat C."/>
            <person name="Karoui M.E."/>
            <person name="Frapy E."/>
            <person name="Garry L."/>
            <person name="Ghigo J.M."/>
            <person name="Gilles A.M."/>
            <person name="Johnson J."/>
            <person name="Le Bouguenec C."/>
            <person name="Lescat M."/>
            <person name="Mangenot S."/>
            <person name="Martinez-Jehanne V."/>
            <person name="Matic I."/>
            <person name="Nassif X."/>
            <person name="Oztas S."/>
            <person name="Petit M.A."/>
            <person name="Pichon C."/>
            <person name="Rouy Z."/>
            <person name="Ruf C.S."/>
            <person name="Schneider D."/>
            <person name="Tourret J."/>
            <person name="Vacherie B."/>
            <person name="Vallenet D."/>
            <person name="Medigue C."/>
            <person name="Rocha E.P.C."/>
            <person name="Denamur E."/>
        </authorList>
    </citation>
    <scope>NUCLEOTIDE SEQUENCE [LARGE SCALE GENOMIC DNA]</scope>
    <source>
        <strain>ED1a</strain>
    </source>
</reference>
<accession>B7MWF7</accession>
<name>MSRP_ECO81</name>
<organism>
    <name type="scientific">Escherichia coli O81 (strain ED1a)</name>
    <dbReference type="NCBI Taxonomy" id="585397"/>
    <lineage>
        <taxon>Bacteria</taxon>
        <taxon>Pseudomonadati</taxon>
        <taxon>Pseudomonadota</taxon>
        <taxon>Gammaproteobacteria</taxon>
        <taxon>Enterobacterales</taxon>
        <taxon>Enterobacteriaceae</taxon>
        <taxon>Escherichia</taxon>
    </lineage>
</organism>
<dbReference type="EC" id="1.8.5.-" evidence="1"/>
<dbReference type="EMBL" id="CU928162">
    <property type="protein sequence ID" value="CAR08423.2"/>
    <property type="molecule type" value="Genomic_DNA"/>
</dbReference>
<dbReference type="RefSeq" id="WP_000740094.1">
    <property type="nucleotide sequence ID" value="NC_011745.1"/>
</dbReference>
<dbReference type="SMR" id="B7MWF7"/>
<dbReference type="KEGG" id="ecq:ECED1_2236"/>
<dbReference type="HOGENOM" id="CLU_045520_0_0_6"/>
<dbReference type="Proteomes" id="UP000000748">
    <property type="component" value="Chromosome"/>
</dbReference>
<dbReference type="GO" id="GO:0042597">
    <property type="term" value="C:periplasmic space"/>
    <property type="evidence" value="ECO:0007669"/>
    <property type="project" value="UniProtKB-SubCell"/>
</dbReference>
<dbReference type="GO" id="GO:0046872">
    <property type="term" value="F:metal ion binding"/>
    <property type="evidence" value="ECO:0007669"/>
    <property type="project" value="UniProtKB-KW"/>
</dbReference>
<dbReference type="GO" id="GO:0043546">
    <property type="term" value="F:molybdopterin cofactor binding"/>
    <property type="evidence" value="ECO:0007669"/>
    <property type="project" value="UniProtKB-UniRule"/>
</dbReference>
<dbReference type="GO" id="GO:0016672">
    <property type="term" value="F:oxidoreductase activity, acting on a sulfur group of donors, quinone or similar compound as acceptor"/>
    <property type="evidence" value="ECO:0007669"/>
    <property type="project" value="UniProtKB-UniRule"/>
</dbReference>
<dbReference type="GO" id="GO:0030091">
    <property type="term" value="P:protein repair"/>
    <property type="evidence" value="ECO:0007669"/>
    <property type="project" value="UniProtKB-UniRule"/>
</dbReference>
<dbReference type="CDD" id="cd02107">
    <property type="entry name" value="YedY_like_Moco"/>
    <property type="match status" value="1"/>
</dbReference>
<dbReference type="FunFam" id="3.90.420.10:FF:000001">
    <property type="entry name" value="Protein-methionine-sulfoxide reductase catalytic subunit MsrP"/>
    <property type="match status" value="1"/>
</dbReference>
<dbReference type="Gene3D" id="3.90.420.10">
    <property type="entry name" value="Oxidoreductase, molybdopterin-binding domain"/>
    <property type="match status" value="1"/>
</dbReference>
<dbReference type="HAMAP" id="MF_01206">
    <property type="entry name" value="MsrP"/>
    <property type="match status" value="1"/>
</dbReference>
<dbReference type="InterPro" id="IPR022867">
    <property type="entry name" value="MsrP"/>
</dbReference>
<dbReference type="InterPro" id="IPR000572">
    <property type="entry name" value="OxRdtase_Mopterin-bd_dom"/>
</dbReference>
<dbReference type="InterPro" id="IPR036374">
    <property type="entry name" value="OxRdtase_Mopterin-bd_sf"/>
</dbReference>
<dbReference type="InterPro" id="IPR006311">
    <property type="entry name" value="TAT_signal"/>
</dbReference>
<dbReference type="NCBIfam" id="NF003767">
    <property type="entry name" value="PRK05363.1"/>
    <property type="match status" value="1"/>
</dbReference>
<dbReference type="PANTHER" id="PTHR43032">
    <property type="entry name" value="PROTEIN-METHIONINE-SULFOXIDE REDUCTASE"/>
    <property type="match status" value="1"/>
</dbReference>
<dbReference type="PANTHER" id="PTHR43032:SF3">
    <property type="entry name" value="PROTEIN-METHIONINE-SULFOXIDE REDUCTASE CATALYTIC SUBUNIT MSRP"/>
    <property type="match status" value="1"/>
</dbReference>
<dbReference type="Pfam" id="PF00174">
    <property type="entry name" value="Oxidored_molyb"/>
    <property type="match status" value="1"/>
</dbReference>
<dbReference type="SUPFAM" id="SSF56524">
    <property type="entry name" value="Oxidoreductase molybdopterin-binding domain"/>
    <property type="match status" value="1"/>
</dbReference>
<dbReference type="PROSITE" id="PS51318">
    <property type="entry name" value="TAT"/>
    <property type="match status" value="1"/>
</dbReference>
<sequence length="334" mass="37383">MKKNQFLKESDVTAESVFFMKRRQVLKALGISAAALSLPHAAHADLLSWFKGNDRPPAPAGKPLEFSKPAAWQNNLPLTPADKVSGYNNFYEFGLDKADPAANAGSLKTDPWTLKISGEVAKPLTLDHDDLTRRFPLEERIYRMRCVEAWSMVVPWIGFPLHKLLALAEPTSNAKYVAFETIYAPEQMPGQQDRFIGGGLKYPYVEGLRLDEAMHPLTLMTVGVYGKALPPQNGAPVRLIVPWKYGFKGIKSIVSIKLTRERPPTTWNLAAPDEYGFYANVNPHVDHPRWSQATERFIGSGGILDVQRQPTLLFNGYADQVASLYRGLDLRENF</sequence>
<feature type="signal peptide" description="Tat-type signal" evidence="1">
    <location>
        <begin position="1"/>
        <end position="44"/>
    </location>
</feature>
<feature type="chain" id="PRO_1000164658" description="Protein-methionine-sulfoxide reductase catalytic subunit MsrP" evidence="1">
    <location>
        <begin position="45"/>
        <end position="334"/>
    </location>
</feature>
<feature type="binding site" evidence="1">
    <location>
        <position position="88"/>
    </location>
    <ligand>
        <name>Mo-molybdopterin</name>
        <dbReference type="ChEBI" id="CHEBI:71302"/>
    </ligand>
</feature>
<feature type="binding site" evidence="1">
    <location>
        <begin position="91"/>
        <end position="92"/>
    </location>
    <ligand>
        <name>Mo-molybdopterin</name>
        <dbReference type="ChEBI" id="CHEBI:71302"/>
    </ligand>
</feature>
<feature type="binding site" evidence="1">
    <location>
        <position position="146"/>
    </location>
    <ligand>
        <name>Mo-molybdopterin</name>
        <dbReference type="ChEBI" id="CHEBI:71302"/>
    </ligand>
    <ligandPart>
        <name>Mo</name>
        <dbReference type="ChEBI" id="CHEBI:28685"/>
    </ligandPart>
</feature>
<feature type="binding site" evidence="1">
    <location>
        <position position="181"/>
    </location>
    <ligand>
        <name>Mo-molybdopterin</name>
        <dbReference type="ChEBI" id="CHEBI:71302"/>
    </ligand>
</feature>
<feature type="binding site" evidence="1">
    <location>
        <position position="233"/>
    </location>
    <ligand>
        <name>Mo-molybdopterin</name>
        <dbReference type="ChEBI" id="CHEBI:71302"/>
    </ligand>
</feature>
<feature type="binding site" evidence="1">
    <location>
        <position position="238"/>
    </location>
    <ligand>
        <name>Mo-molybdopterin</name>
        <dbReference type="ChEBI" id="CHEBI:71302"/>
    </ligand>
</feature>
<feature type="binding site" evidence="1">
    <location>
        <begin position="249"/>
        <end position="251"/>
    </location>
    <ligand>
        <name>Mo-molybdopterin</name>
        <dbReference type="ChEBI" id="CHEBI:71302"/>
    </ligand>
</feature>
<keyword id="KW-0479">Metal-binding</keyword>
<keyword id="KW-0500">Molybdenum</keyword>
<keyword id="KW-0560">Oxidoreductase</keyword>
<keyword id="KW-0574">Periplasm</keyword>
<keyword id="KW-0732">Signal</keyword>